<proteinExistence type="inferred from homology"/>
<organism>
    <name type="scientific">Burkholderia thailandensis (strain ATCC 700388 / DSM 13276 / CCUG 48851 / CIP 106301 / E264)</name>
    <dbReference type="NCBI Taxonomy" id="271848"/>
    <lineage>
        <taxon>Bacteria</taxon>
        <taxon>Pseudomonadati</taxon>
        <taxon>Pseudomonadota</taxon>
        <taxon>Betaproteobacteria</taxon>
        <taxon>Burkholderiales</taxon>
        <taxon>Burkholderiaceae</taxon>
        <taxon>Burkholderia</taxon>
        <taxon>pseudomallei group</taxon>
    </lineage>
</organism>
<evidence type="ECO:0000250" key="1">
    <source>
        <dbReference type="UniProtKB" id="Q45614"/>
    </source>
</evidence>
<evidence type="ECO:0000255" key="2"/>
<evidence type="ECO:0000255" key="3">
    <source>
        <dbReference type="PROSITE-ProRule" id="PRU00107"/>
    </source>
</evidence>
<evidence type="ECO:0000255" key="4">
    <source>
        <dbReference type="PROSITE-ProRule" id="PRU00169"/>
    </source>
</evidence>
<evidence type="ECO:0000269" key="5">
    <source>
    </source>
</evidence>
<evidence type="ECO:0000303" key="6">
    <source>
    </source>
</evidence>
<evidence type="ECO:0000305" key="7"/>
<evidence type="ECO:0000305" key="8">
    <source>
    </source>
</evidence>
<gene>
    <name evidence="6" type="primary">atsR</name>
    <name type="ordered locus">BTH_I0633</name>
</gene>
<reference key="1">
    <citation type="journal article" date="2005" name="BMC Genomics">
        <title>Bacterial genome adaptation to niches: divergence of the potential virulence genes in three Burkholderia species of different survival strategies.</title>
        <authorList>
            <person name="Kim H.S."/>
            <person name="Schell M.A."/>
            <person name="Yu Y."/>
            <person name="Ulrich R.L."/>
            <person name="Sarria S.H."/>
            <person name="Nierman W.C."/>
            <person name="DeShazer D."/>
        </authorList>
    </citation>
    <scope>NUCLEOTIDE SEQUENCE [LARGE SCALE GENOMIC DNA]</scope>
    <source>
        <strain>ATCC 700388 / DSM 13276 / CCUG 48851 / CIP 106301 / E264</strain>
    </source>
</reference>
<reference key="2">
    <citation type="journal article" date="2018" name="Antimicrob. Agents Chemother.">
        <title>Thailandamide, a Fatty Acid Synthesis Antibiotic That Is Coexpressed with a Resistant Target Gene.</title>
        <authorList>
            <person name="Wozniak C.E."/>
            <person name="Lin Z."/>
            <person name="Schmidt E.W."/>
            <person name="Hughes K.T."/>
            <person name="Liou T.G."/>
        </authorList>
    </citation>
    <scope>FUNCTION</scope>
    <scope>DISRUPTION PHENOTYPE</scope>
    <source>
        <strain>ATCC 700388 / DSM 13276 / CCUG 48851 / CIP 106301 / E264</strain>
    </source>
</reference>
<keyword id="KW-0997">Cell inner membrane</keyword>
<keyword id="KW-1003">Cell membrane</keyword>
<keyword id="KW-0418">Kinase</keyword>
<keyword id="KW-0472">Membrane</keyword>
<keyword id="KW-0597">Phosphoprotein</keyword>
<keyword id="KW-0808">Transferase</keyword>
<keyword id="KW-0812">Transmembrane</keyword>
<keyword id="KW-1133">Transmembrane helix</keyword>
<keyword id="KW-0902">Two-component regulatory system</keyword>
<sequence length="602" mass="66575">MSRVKWRNEKIIVALGSLWILGFAAWAFLLFDLLGTSVKEGILEGPREGVFWTAAQYRNSFSRFERQLILYATRQDRDFDNVLLQLDSLEASFGFLERPSEVSAYWLSIPKARDDIAELSRFMATLRRDVPALGARAGDSRRVLEDVARHWPKVNALANYFRAIEMEQRDFTFHQLKEKRRAIVMLGGVLGVILGALFLLLFYTIRTRGSLLEQQQAALDAQRKASDRAFEMIAAKNAFLGMVSHELRTPLQAICGSIEVLLARPQSDANMKTIKRLQNSAASLEAQVKDLTDYIKLRSTNRSVQSDPVEIAPLLADVLDPLRGRIRDKHLNASLRVEPPDLVVKSDRKLIQQIASNLVENSIKYTNSGTIAISAELAGTPSNRTMQIAVRDTGVGIAKNLLSKIFEPFFRVNDPGVRHVDGIGMGLAVVQELVVALRGHVDVRSVVGEGSEFVVTLPVELPGSADAPDDDAPPSLQTTHRDLHALVVDDNENARETLGAMLTALGIRADLRGTGKEGLRCFGECQHDIVVLDLELPDISGFEVAEQIRWATSPDAAKKTTILGVSAYESAMLKGDHAVFDAFVPKPIHLDTLNGIVSRLRS</sequence>
<protein>
    <recommendedName>
        <fullName evidence="6">Sensor histidine kinase AtsR</fullName>
        <ecNumber evidence="1">2.7.13.3</ecNumber>
    </recommendedName>
    <alternativeName>
        <fullName evidence="6">Global regulator AtsR</fullName>
    </alternativeName>
</protein>
<feature type="chain" id="PRO_0000452502" description="Sensor histidine kinase AtsR">
    <location>
        <begin position="1"/>
        <end position="602"/>
    </location>
</feature>
<feature type="transmembrane region" description="Helical" evidence="2">
    <location>
        <begin position="11"/>
        <end position="31"/>
    </location>
</feature>
<feature type="transmembrane region" description="Helical" evidence="2">
    <location>
        <begin position="182"/>
        <end position="202"/>
    </location>
</feature>
<feature type="domain" description="Histidine kinase" evidence="3">
    <location>
        <begin position="242"/>
        <end position="461"/>
    </location>
</feature>
<feature type="domain" description="Response regulatory" evidence="4">
    <location>
        <begin position="484"/>
        <end position="601"/>
    </location>
</feature>
<feature type="modified residue" description="Phosphohistidine; by autocatalysis" evidence="3">
    <location>
        <position position="245"/>
    </location>
</feature>
<feature type="modified residue" description="4-aspartylphosphate" evidence="4">
    <location>
        <position position="533"/>
    </location>
</feature>
<comment type="function">
    <text evidence="8">Member of a two-component regulatory system involved in control of gene expression; inhibits synthesis of (at least) the polyketide antibiotic thailandamide. Its two-component partner may be BTH_I0635.</text>
</comment>
<comment type="catalytic activity">
    <reaction evidence="1">
        <text>ATP + protein L-histidine = ADP + protein N-phospho-L-histidine.</text>
        <dbReference type="EC" id="2.7.13.3"/>
    </reaction>
</comment>
<comment type="subcellular location">
    <subcellularLocation>
        <location evidence="7">Cell inner membrane</location>
        <topology evidence="2">Multi-pass membrane protein</topology>
    </subcellularLocation>
</comment>
<comment type="disruption phenotype">
    <text evidence="5">Increased production of thailandamide. Inhibits growth of Salmonella in an overlay assay.</text>
</comment>
<comment type="miscellaneous">
    <text evidence="8">Thailandamide is a polyketide that is toxic to human cell lines but also has antibacterial activity on E.coli, S.typhimurium and S.aureus. It probably acts on acetyl-CoA carboxylase in the fatty acid synthesis pathway, which is rarely found to be an antibiotic target. These data suggest it might be a good starting point for engineering of novel antibiotics.</text>
</comment>
<accession>Q2T0V9</accession>
<dbReference type="EC" id="2.7.13.3" evidence="1"/>
<dbReference type="EMBL" id="CP000086">
    <property type="protein sequence ID" value="ABC38722.1"/>
    <property type="molecule type" value="Genomic_DNA"/>
</dbReference>
<dbReference type="RefSeq" id="WP_011401822.1">
    <property type="nucleotide sequence ID" value="NZ_CP008785.1"/>
</dbReference>
<dbReference type="SMR" id="Q2T0V9"/>
<dbReference type="GeneID" id="45120391"/>
<dbReference type="KEGG" id="bte:BTH_I0633"/>
<dbReference type="HOGENOM" id="CLU_000445_114_59_4"/>
<dbReference type="Proteomes" id="UP000001930">
    <property type="component" value="Chromosome I"/>
</dbReference>
<dbReference type="GO" id="GO:0005886">
    <property type="term" value="C:plasma membrane"/>
    <property type="evidence" value="ECO:0007669"/>
    <property type="project" value="UniProtKB-SubCell"/>
</dbReference>
<dbReference type="GO" id="GO:0009927">
    <property type="term" value="F:histidine phosphotransfer kinase activity"/>
    <property type="evidence" value="ECO:0007669"/>
    <property type="project" value="TreeGrafter"/>
</dbReference>
<dbReference type="GO" id="GO:0000155">
    <property type="term" value="F:phosphorelay sensor kinase activity"/>
    <property type="evidence" value="ECO:0007669"/>
    <property type="project" value="InterPro"/>
</dbReference>
<dbReference type="CDD" id="cd00082">
    <property type="entry name" value="HisKA"/>
    <property type="match status" value="1"/>
</dbReference>
<dbReference type="CDD" id="cd17546">
    <property type="entry name" value="REC_hyHK_CKI1_RcsC-like"/>
    <property type="match status" value="1"/>
</dbReference>
<dbReference type="FunFam" id="3.30.565.10:FF:000006">
    <property type="entry name" value="Sensor histidine kinase WalK"/>
    <property type="match status" value="1"/>
</dbReference>
<dbReference type="Gene3D" id="1.10.287.130">
    <property type="match status" value="1"/>
</dbReference>
<dbReference type="Gene3D" id="3.40.50.2300">
    <property type="match status" value="1"/>
</dbReference>
<dbReference type="Gene3D" id="3.30.565.10">
    <property type="entry name" value="Histidine kinase-like ATPase, C-terminal domain"/>
    <property type="match status" value="1"/>
</dbReference>
<dbReference type="InterPro" id="IPR011006">
    <property type="entry name" value="CheY-like_superfamily"/>
</dbReference>
<dbReference type="InterPro" id="IPR036890">
    <property type="entry name" value="HATPase_C_sf"/>
</dbReference>
<dbReference type="InterPro" id="IPR005467">
    <property type="entry name" value="His_kinase_dom"/>
</dbReference>
<dbReference type="InterPro" id="IPR003661">
    <property type="entry name" value="HisK_dim/P_dom"/>
</dbReference>
<dbReference type="InterPro" id="IPR036097">
    <property type="entry name" value="HisK_dim/P_sf"/>
</dbReference>
<dbReference type="InterPro" id="IPR004358">
    <property type="entry name" value="Sig_transdc_His_kin-like_C"/>
</dbReference>
<dbReference type="InterPro" id="IPR001789">
    <property type="entry name" value="Sig_transdc_resp-reg_receiver"/>
</dbReference>
<dbReference type="PANTHER" id="PTHR43047:SF72">
    <property type="entry name" value="OSMOSENSING HISTIDINE PROTEIN KINASE SLN1"/>
    <property type="match status" value="1"/>
</dbReference>
<dbReference type="PANTHER" id="PTHR43047">
    <property type="entry name" value="TWO-COMPONENT HISTIDINE PROTEIN KINASE"/>
    <property type="match status" value="1"/>
</dbReference>
<dbReference type="Pfam" id="PF02518">
    <property type="entry name" value="HATPase_c"/>
    <property type="match status" value="1"/>
</dbReference>
<dbReference type="Pfam" id="PF00512">
    <property type="entry name" value="HisKA"/>
    <property type="match status" value="1"/>
</dbReference>
<dbReference type="Pfam" id="PF00072">
    <property type="entry name" value="Response_reg"/>
    <property type="match status" value="1"/>
</dbReference>
<dbReference type="PRINTS" id="PR00344">
    <property type="entry name" value="BCTRLSENSOR"/>
</dbReference>
<dbReference type="SMART" id="SM00387">
    <property type="entry name" value="HATPase_c"/>
    <property type="match status" value="1"/>
</dbReference>
<dbReference type="SMART" id="SM00388">
    <property type="entry name" value="HisKA"/>
    <property type="match status" value="1"/>
</dbReference>
<dbReference type="SMART" id="SM00448">
    <property type="entry name" value="REC"/>
    <property type="match status" value="1"/>
</dbReference>
<dbReference type="SUPFAM" id="SSF55874">
    <property type="entry name" value="ATPase domain of HSP90 chaperone/DNA topoisomerase II/histidine kinase"/>
    <property type="match status" value="1"/>
</dbReference>
<dbReference type="SUPFAM" id="SSF52172">
    <property type="entry name" value="CheY-like"/>
    <property type="match status" value="1"/>
</dbReference>
<dbReference type="SUPFAM" id="SSF47384">
    <property type="entry name" value="Homodimeric domain of signal transducing histidine kinase"/>
    <property type="match status" value="1"/>
</dbReference>
<dbReference type="PROSITE" id="PS50109">
    <property type="entry name" value="HIS_KIN"/>
    <property type="match status" value="1"/>
</dbReference>
<dbReference type="PROSITE" id="PS50110">
    <property type="entry name" value="RESPONSE_REGULATORY"/>
    <property type="match status" value="1"/>
</dbReference>
<name>ATSR_BURTA</name>